<reference key="1">
    <citation type="journal article" date="2010" name="Genome Biol. Evol.">
        <title>Continuing evolution of Burkholderia mallei through genome reduction and large-scale rearrangements.</title>
        <authorList>
            <person name="Losada L."/>
            <person name="Ronning C.M."/>
            <person name="DeShazer D."/>
            <person name="Woods D."/>
            <person name="Fedorova N."/>
            <person name="Kim H.S."/>
            <person name="Shabalina S.A."/>
            <person name="Pearson T.R."/>
            <person name="Brinkac L."/>
            <person name="Tan P."/>
            <person name="Nandi T."/>
            <person name="Crabtree J."/>
            <person name="Badger J."/>
            <person name="Beckstrom-Sternberg S."/>
            <person name="Saqib M."/>
            <person name="Schutzer S.E."/>
            <person name="Keim P."/>
            <person name="Nierman W.C."/>
        </authorList>
    </citation>
    <scope>NUCLEOTIDE SEQUENCE [LARGE SCALE GENOMIC DNA]</scope>
    <source>
        <strain>1106a</strain>
    </source>
</reference>
<comment type="function">
    <text evidence="1">Required for invasion of epithelial cells, as well as for survival within host cells, escape from endocytic vesicles and subsequent actin-tail formation. Probably regulates the secretion of effectors BipB and BipC and their final integration into the target cell membrane (By similarity).</text>
</comment>
<comment type="subcellular location">
    <subcellularLocation>
        <location evidence="1">Secreted</location>
    </subcellularLocation>
    <text evidence="1">Secreted via the bsa type III secretion system. Localizes to the tip of the external secretion needle that is part of the secretion apparatus (By similarity).</text>
</comment>
<comment type="domain">
    <text evidence="1">The N-terminal domain is an intra-molecular chaperone that prevents premature oligomerization of the residues on the coiled-coil region that are involved in interactions with the needle and/or itself. The residues in the C-terminal domain probably form oligomeric structures at the tip of the needle that are responsible for the regulation of secretion of other effectors (By similarity).</text>
</comment>
<comment type="similarity">
    <text evidence="3">Belongs to the invasin protein D family.</text>
</comment>
<protein>
    <recommendedName>
        <fullName>Translocator protein BipD</fullName>
    </recommendedName>
</protein>
<dbReference type="EMBL" id="CP000573">
    <property type="protein sequence ID" value="ABN94674.1"/>
    <property type="molecule type" value="Genomic_DNA"/>
</dbReference>
<dbReference type="RefSeq" id="WP_004537374.1">
    <property type="nucleotide sequence ID" value="NC_009078.1"/>
</dbReference>
<dbReference type="SMR" id="A3P6Z4"/>
<dbReference type="KEGG" id="bpl:BURPS1106A_A2071"/>
<dbReference type="HOGENOM" id="CLU_893331_0_0_4"/>
<dbReference type="Proteomes" id="UP000006738">
    <property type="component" value="Chromosome II"/>
</dbReference>
<dbReference type="GO" id="GO:0005576">
    <property type="term" value="C:extracellular region"/>
    <property type="evidence" value="ECO:0007669"/>
    <property type="project" value="UniProtKB-SubCell"/>
</dbReference>
<dbReference type="Gene3D" id="1.20.1710.10">
    <property type="entry name" value="IpaD-like"/>
    <property type="match status" value="1"/>
</dbReference>
<dbReference type="InterPro" id="IPR036708">
    <property type="entry name" value="BipD-like_sf"/>
</dbReference>
<dbReference type="InterPro" id="IPR009483">
    <property type="entry name" value="IpaD/BipD/SipD"/>
</dbReference>
<dbReference type="NCBIfam" id="TIGR02553">
    <property type="entry name" value="SipD_IpaD_SspD"/>
    <property type="match status" value="1"/>
</dbReference>
<dbReference type="Pfam" id="PF06511">
    <property type="entry name" value="T3SS_TC"/>
    <property type="match status" value="1"/>
</dbReference>
<dbReference type="SUPFAM" id="SSF140693">
    <property type="entry name" value="IpaD-like"/>
    <property type="match status" value="1"/>
</dbReference>
<keyword id="KW-0175">Coiled coil</keyword>
<keyword id="KW-0964">Secreted</keyword>
<keyword id="KW-0843">Virulence</keyword>
<gene>
    <name type="primary">bipD</name>
    <name type="ordered locus">BURPS1106A_A2071</name>
</gene>
<organism>
    <name type="scientific">Burkholderia pseudomallei (strain 1106a)</name>
    <dbReference type="NCBI Taxonomy" id="357348"/>
    <lineage>
        <taxon>Bacteria</taxon>
        <taxon>Pseudomonadati</taxon>
        <taxon>Pseudomonadota</taxon>
        <taxon>Betaproteobacteria</taxon>
        <taxon>Burkholderiales</taxon>
        <taxon>Burkholderiaceae</taxon>
        <taxon>Burkholderia</taxon>
        <taxon>pseudomallei group</taxon>
    </lineage>
</organism>
<evidence type="ECO:0000250" key="1"/>
<evidence type="ECO:0000255" key="2"/>
<evidence type="ECO:0000305" key="3"/>
<proteinExistence type="inferred from homology"/>
<name>BIPD_BURP0</name>
<feature type="chain" id="PRO_0000344006" description="Translocator protein BipD">
    <location>
        <begin position="1"/>
        <end position="310"/>
    </location>
</feature>
<feature type="coiled-coil region" evidence="2">
    <location>
        <begin position="127"/>
        <end position="171"/>
    </location>
</feature>
<feature type="coiled-coil region" evidence="2">
    <location>
        <begin position="250"/>
        <end position="299"/>
    </location>
</feature>
<sequence length="310" mass="34033">MNMHVDMGRALTVRDWPALEALAKTMPADAGAREMTDDDLRAAGVDRRVPEQKLGAAIDEFASLRLPDRIDGRFVDGRRANLTVFDDARVAVRGHARAQRNLLERLETELLGGTLDTAGDEGGIQPDPILQGLVDVIGQGKSDIDAYATIVEGLTKYFQSVADVMSKLQDYISAKDDKNMKIDGGKIKALIQQVIDHLPTMQLPKGADIARWRKELGDAVSISDSGVVTINPDKLIKMRDSLPPDGTVWDTARYQAWNTAFSGQKDNIQNDVQTLVEKYSHQNSNFDNLVKVLSGAISTLTDTAKSYLQI</sequence>
<accession>A3P6Z4</accession>